<dbReference type="EMBL" id="X17403">
    <property type="protein sequence ID" value="CAA35341.1"/>
    <property type="molecule type" value="Genomic_DNA"/>
</dbReference>
<dbReference type="EMBL" id="BK000394">
    <property type="protein sequence ID" value="DAA00099.2"/>
    <property type="molecule type" value="Genomic_DNA"/>
</dbReference>
<dbReference type="PIR" id="S09870">
    <property type="entry name" value="QQBEK3"/>
</dbReference>
<dbReference type="PDB" id="7ET2">
    <property type="method" value="EM"/>
    <property type="resolution" value="4.20 A"/>
    <property type="chains" value="A/B/C/D/E/F/G/H/I/J/K/L=1-697"/>
</dbReference>
<dbReference type="PDB" id="7ETM">
    <property type="method" value="EM"/>
    <property type="resolution" value="5.90 A"/>
    <property type="chains" value="A/B/C/D/E/F/G/H/I/J/K/L=1-697"/>
</dbReference>
<dbReference type="PDB" id="8HEU">
    <property type="method" value="EM"/>
    <property type="resolution" value="4.60 A"/>
    <property type="chains" value="A/B/C/D/E/F/G/H/I/J/K/L=1-697"/>
</dbReference>
<dbReference type="PDB" id="8HEV">
    <property type="method" value="EM"/>
    <property type="resolution" value="4.20 A"/>
    <property type="chains" value="A/B/C/G/H/I/J/K/L/M/U/V=1-697"/>
</dbReference>
<dbReference type="PDBsum" id="7ET2"/>
<dbReference type="PDBsum" id="7ETM"/>
<dbReference type="PDBsum" id="8HEU"/>
<dbReference type="PDBsum" id="8HEV"/>
<dbReference type="SMR" id="P16735"/>
<dbReference type="Proteomes" id="UP000008991">
    <property type="component" value="Segment"/>
</dbReference>
<dbReference type="Proteomes" id="UP000008992">
    <property type="component" value="Segment"/>
</dbReference>
<dbReference type="GO" id="GO:0042025">
    <property type="term" value="C:host cell nucleus"/>
    <property type="evidence" value="ECO:0007669"/>
    <property type="project" value="UniProtKB-SubCell"/>
</dbReference>
<dbReference type="GO" id="GO:0044423">
    <property type="term" value="C:virion component"/>
    <property type="evidence" value="ECO:0007669"/>
    <property type="project" value="UniProtKB-KW"/>
</dbReference>
<dbReference type="GO" id="GO:0051276">
    <property type="term" value="P:chromosome organization"/>
    <property type="evidence" value="ECO:0007669"/>
    <property type="project" value="InterPro"/>
</dbReference>
<dbReference type="HAMAP" id="MF_04012">
    <property type="entry name" value="HSV_PORTL"/>
    <property type="match status" value="1"/>
</dbReference>
<dbReference type="InterPro" id="IPR002660">
    <property type="entry name" value="Herpes_Portal"/>
</dbReference>
<dbReference type="Pfam" id="PF01763">
    <property type="entry name" value="Herpes_UL6"/>
    <property type="match status" value="1"/>
</dbReference>
<organismHost>
    <name type="scientific">Homo sapiens</name>
    <name type="common">Human</name>
    <dbReference type="NCBI Taxonomy" id="9606"/>
</organismHost>
<reference key="1">
    <citation type="journal article" date="1990" name="Curr. Top. Microbiol. Immunol.">
        <title>Analysis of the protein-coding content of the sequence of human cytomegalovirus strain AD169.</title>
        <authorList>
            <person name="Chee M.S."/>
            <person name="Bankier A.T."/>
            <person name="Beck S."/>
            <person name="Bohni R."/>
            <person name="Brown C.M."/>
            <person name="Cerny R."/>
            <person name="Horsnell T."/>
            <person name="Hutchison C.A. III"/>
            <person name="Kouzarides T."/>
            <person name="Martignetti J.A."/>
            <person name="Preddie E."/>
            <person name="Satchwell S.C."/>
            <person name="Tomlinson P."/>
            <person name="Weston K.M."/>
            <person name="Barrell B.G."/>
        </authorList>
    </citation>
    <scope>NUCLEOTIDE SEQUENCE [LARGE SCALE GENOMIC DNA]</scope>
</reference>
<reference key="2">
    <citation type="journal article" date="2003" name="J. Gen. Virol.">
        <title>The human cytomegalovirus genome revisited: comparison with the chimpanzee cytomegalovirus genome.</title>
        <authorList>
            <person name="Davison A.J."/>
            <person name="Dolan A."/>
            <person name="Akter P."/>
            <person name="Addison C."/>
            <person name="Dargan D.J."/>
            <person name="Alcendor D.J."/>
            <person name="McGeoch D.J."/>
            <person name="Hayward G.S."/>
        </authorList>
    </citation>
    <scope>GENOME REANNOTATION</scope>
</reference>
<reference key="3">
    <citation type="journal article" date="2003" name="J. Gen. Virol.">
        <authorList>
            <person name="Davison A.J."/>
            <person name="Dolan A."/>
            <person name="Akter P."/>
            <person name="Addison C."/>
            <person name="Dargan D.J."/>
            <person name="Alcendor D.J."/>
            <person name="McGeoch D.J."/>
            <person name="Hayward G.S."/>
        </authorList>
    </citation>
    <scope>ERRATUM OF PUBMED:12533697</scope>
</reference>
<reference key="4">
    <citation type="journal article" date="2004" name="J. Virol.">
        <title>Identification of proteins in human cytomegalovirus (HCMV) particles: the HCMV proteome.</title>
        <authorList>
            <person name="Varnum S.M."/>
            <person name="Streblow D.N."/>
            <person name="Monroe M.E."/>
            <person name="Smith P."/>
            <person name="Auberry K.J."/>
            <person name="Pasa-Tolic L."/>
            <person name="Wang D."/>
            <person name="Camp D.G. II"/>
            <person name="Rodland K."/>
            <person name="Wiley S."/>
            <person name="Britt W."/>
            <person name="Shenk T."/>
            <person name="Smith R.D."/>
            <person name="Nelson J.A."/>
        </authorList>
    </citation>
    <scope>IDENTIFICATION</scope>
</reference>
<reference key="5">
    <citation type="journal article" date="2004" name="J. Virol.">
        <authorList>
            <person name="Varnum S.M."/>
            <person name="Streblow D.N."/>
            <person name="Monroe M.E."/>
            <person name="Smith P."/>
            <person name="Auberry K.J."/>
            <person name="Pasa-Tolic L."/>
            <person name="Wang D."/>
            <person name="Camp D.G. II"/>
            <person name="Rodland K."/>
            <person name="Wiley S."/>
            <person name="Britt W."/>
            <person name="Shenk T."/>
            <person name="Smith R.D."/>
            <person name="Nelson J.A."/>
        </authorList>
    </citation>
    <scope>ERRATUM OF PUBMED:15452216</scope>
</reference>
<reference key="6">
    <citation type="submission" date="2008-09" db="EMBL/GenBank/DDBJ databases">
        <authorList>
            <person name="Davison A.J."/>
        </authorList>
    </citation>
    <scope>SEQUENCE REVISION TO 157</scope>
</reference>
<gene>
    <name type="primary">UL104</name>
</gene>
<sequence>MERNHWNEKSSGAKRSRERDLTLSTIRSILAADERLRIKASSYLGVGRGVDDEAVIDIFPTGQTMSFLRLLHGFLGTCRGQSMHQVLRDPCVLRKQLLYGVCKTLFDTITVRRVAEEWKLHAALFPYRALDEEDLEQYLLVWSASLRQSVQTGVLGALRDILYQYADNDDYGLYVDWCVTVGLVPLLDVKTKPSEAAERAQFVRAAVQRATETHPLAQDLLQANLALLLQVAERLGAVRVANAPEVRVFKKVRSERLEAQLRGKHIRLYVAAEPLAYERDKLLFTTPVAHLHEEILRYDGLCRHQKICQLLNTFPVKVVTASRHELNCKKLVEMMEQHDRGSDAKKSIMKFLLNVSDSKSRIGIEDSVESFLQDLTPSLVDQNRLLPARGPGGPGVVGPGGAVVGGPAGHVGLLPPPPGPAAPERDIRDLFKKQVIKCLEEQIQSQVDEIQDLRTLNQTWENRVRELRDLLTRYASRREDSMSLGARDAELYHLPVLEAVRKARDAAPFRPLAVEDNRLVANSFFSQFVPGTESLERFLTQLWENEYFRTFRLRRLVTHQGAEEAIVYSNYTVERVTLPYLCHILALGTLDPVPEAYLQLSFGEIVAAAYDDSKFCRYVELICSREKARRRQMSREAAGGVPERGTASSGGPGTLERSAPRRLITADEERRGPERVGRFRNGGPDDPRRAGGPYGFH</sequence>
<name>PORTL_HCMVA</name>
<keyword id="KW-0002">3D-structure</keyword>
<keyword id="KW-1048">Host nucleus</keyword>
<keyword id="KW-1185">Reference proteome</keyword>
<keyword id="KW-0231">Viral genome packaging</keyword>
<keyword id="KW-1188">Viral release from host cell</keyword>
<keyword id="KW-0946">Virion</keyword>
<proteinExistence type="evidence at protein level"/>
<comment type="function">
    <text evidence="1">Forms a portal in the viral capsid through which viral DNA is translocated during DNA packaging. Assembles as a dodecamer at a single fivefold axe of the T=16 icosahedric capsid. Binds to the molecular motor that translocates the viral DNA, termed terminase.</text>
</comment>
<comment type="subunit">
    <text evidence="1">Homododecamerizes. Interacts with terminase subunits TRM1 and TRM3.</text>
</comment>
<comment type="subcellular location">
    <subcellularLocation>
        <location evidence="1">Virion</location>
    </subcellularLocation>
    <subcellularLocation>
        <location evidence="1">Host nucleus</location>
    </subcellularLocation>
</comment>
<comment type="similarity">
    <text evidence="1">Belongs to the herpesviridae portal protein family.</text>
</comment>
<protein>
    <recommendedName>
        <fullName evidence="1">Portal protein</fullName>
    </recommendedName>
</protein>
<feature type="chain" id="PRO_0000115913" description="Portal protein">
    <location>
        <begin position="1"/>
        <end position="697"/>
    </location>
</feature>
<feature type="region of interest" description="Disordered" evidence="2">
    <location>
        <begin position="633"/>
        <end position="697"/>
    </location>
</feature>
<feature type="compositionally biased region" description="Basic and acidic residues" evidence="2">
    <location>
        <begin position="664"/>
        <end position="689"/>
    </location>
</feature>
<organism>
    <name type="scientific">Human cytomegalovirus (strain AD169)</name>
    <name type="common">HHV-5</name>
    <name type="synonym">Human herpesvirus 5</name>
    <dbReference type="NCBI Taxonomy" id="10360"/>
    <lineage>
        <taxon>Viruses</taxon>
        <taxon>Duplodnaviria</taxon>
        <taxon>Heunggongvirae</taxon>
        <taxon>Peploviricota</taxon>
        <taxon>Herviviricetes</taxon>
        <taxon>Herpesvirales</taxon>
        <taxon>Orthoherpesviridae</taxon>
        <taxon>Betaherpesvirinae</taxon>
        <taxon>Cytomegalovirus</taxon>
        <taxon>Cytomegalovirus humanbeta5</taxon>
        <taxon>Human cytomegalovirus</taxon>
    </lineage>
</organism>
<evidence type="ECO:0000255" key="1">
    <source>
        <dbReference type="HAMAP-Rule" id="MF_04012"/>
    </source>
</evidence>
<evidence type="ECO:0000256" key="2">
    <source>
        <dbReference type="SAM" id="MobiDB-lite"/>
    </source>
</evidence>
<accession>P16735</accession>
<accession>Q7M6T5</accession>